<name>C71AO_ARATH</name>
<protein>
    <recommendedName>
        <fullName>Cytochrome P450 71A24</fullName>
        <ecNumber>1.14.-.-</ecNumber>
    </recommendedName>
</protein>
<keyword id="KW-0025">Alternative splicing</keyword>
<keyword id="KW-0349">Heme</keyword>
<keyword id="KW-0408">Iron</keyword>
<keyword id="KW-0472">Membrane</keyword>
<keyword id="KW-0479">Metal-binding</keyword>
<keyword id="KW-0503">Monooxygenase</keyword>
<keyword id="KW-0560">Oxidoreductase</keyword>
<keyword id="KW-1185">Reference proteome</keyword>
<keyword id="KW-0812">Transmembrane</keyword>
<keyword id="KW-1133">Transmembrane helix</keyword>
<reference key="1">
    <citation type="journal article" date="2000" name="Nature">
        <title>Sequence and analysis of chromosome 3 of the plant Arabidopsis thaliana.</title>
        <authorList>
            <person name="Salanoubat M."/>
            <person name="Lemcke K."/>
            <person name="Rieger M."/>
            <person name="Ansorge W."/>
            <person name="Unseld M."/>
            <person name="Fartmann B."/>
            <person name="Valle G."/>
            <person name="Bloecker H."/>
            <person name="Perez-Alonso M."/>
            <person name="Obermaier B."/>
            <person name="Delseny M."/>
            <person name="Boutry M."/>
            <person name="Grivell L.A."/>
            <person name="Mache R."/>
            <person name="Puigdomenech P."/>
            <person name="De Simone V."/>
            <person name="Choisne N."/>
            <person name="Artiguenave F."/>
            <person name="Robert C."/>
            <person name="Brottier P."/>
            <person name="Wincker P."/>
            <person name="Cattolico L."/>
            <person name="Weissenbach J."/>
            <person name="Saurin W."/>
            <person name="Quetier F."/>
            <person name="Schaefer M."/>
            <person name="Mueller-Auer S."/>
            <person name="Gabel C."/>
            <person name="Fuchs M."/>
            <person name="Benes V."/>
            <person name="Wurmbach E."/>
            <person name="Drzonek H."/>
            <person name="Erfle H."/>
            <person name="Jordan N."/>
            <person name="Bangert S."/>
            <person name="Wiedelmann R."/>
            <person name="Kranz H."/>
            <person name="Voss H."/>
            <person name="Holland R."/>
            <person name="Brandt P."/>
            <person name="Nyakatura G."/>
            <person name="Vezzi A."/>
            <person name="D'Angelo M."/>
            <person name="Pallavicini A."/>
            <person name="Toppo S."/>
            <person name="Simionati B."/>
            <person name="Conrad A."/>
            <person name="Hornischer K."/>
            <person name="Kauer G."/>
            <person name="Loehnert T.-H."/>
            <person name="Nordsiek G."/>
            <person name="Reichelt J."/>
            <person name="Scharfe M."/>
            <person name="Schoen O."/>
            <person name="Bargues M."/>
            <person name="Terol J."/>
            <person name="Climent J."/>
            <person name="Navarro P."/>
            <person name="Collado C."/>
            <person name="Perez-Perez A."/>
            <person name="Ottenwaelder B."/>
            <person name="Duchemin D."/>
            <person name="Cooke R."/>
            <person name="Laudie M."/>
            <person name="Berger-Llauro C."/>
            <person name="Purnelle B."/>
            <person name="Masuy D."/>
            <person name="de Haan M."/>
            <person name="Maarse A.C."/>
            <person name="Alcaraz J.-P."/>
            <person name="Cottet A."/>
            <person name="Casacuberta E."/>
            <person name="Monfort A."/>
            <person name="Argiriou A."/>
            <person name="Flores M."/>
            <person name="Liguori R."/>
            <person name="Vitale D."/>
            <person name="Mannhaupt G."/>
            <person name="Haase D."/>
            <person name="Schoof H."/>
            <person name="Rudd S."/>
            <person name="Zaccaria P."/>
            <person name="Mewes H.-W."/>
            <person name="Mayer K.F.X."/>
            <person name="Kaul S."/>
            <person name="Town C.D."/>
            <person name="Koo H.L."/>
            <person name="Tallon L.J."/>
            <person name="Jenkins J."/>
            <person name="Rooney T."/>
            <person name="Rizzo M."/>
            <person name="Walts A."/>
            <person name="Utterback T."/>
            <person name="Fujii C.Y."/>
            <person name="Shea T.P."/>
            <person name="Creasy T.H."/>
            <person name="Haas B."/>
            <person name="Maiti R."/>
            <person name="Wu D."/>
            <person name="Peterson J."/>
            <person name="Van Aken S."/>
            <person name="Pai G."/>
            <person name="Militscher J."/>
            <person name="Sellers P."/>
            <person name="Gill J.E."/>
            <person name="Feldblyum T.V."/>
            <person name="Preuss D."/>
            <person name="Lin X."/>
            <person name="Nierman W.C."/>
            <person name="Salzberg S.L."/>
            <person name="White O."/>
            <person name="Venter J.C."/>
            <person name="Fraser C.M."/>
            <person name="Kaneko T."/>
            <person name="Nakamura Y."/>
            <person name="Sato S."/>
            <person name="Kato T."/>
            <person name="Asamizu E."/>
            <person name="Sasamoto S."/>
            <person name="Kimura T."/>
            <person name="Idesawa K."/>
            <person name="Kawashima K."/>
            <person name="Kishida Y."/>
            <person name="Kiyokawa C."/>
            <person name="Kohara M."/>
            <person name="Matsumoto M."/>
            <person name="Matsuno A."/>
            <person name="Muraki A."/>
            <person name="Nakayama S."/>
            <person name="Nakazaki N."/>
            <person name="Shinpo S."/>
            <person name="Takeuchi C."/>
            <person name="Wada T."/>
            <person name="Watanabe A."/>
            <person name="Yamada M."/>
            <person name="Yasuda M."/>
            <person name="Tabata S."/>
        </authorList>
    </citation>
    <scope>NUCLEOTIDE SEQUENCE [LARGE SCALE GENOMIC DNA]</scope>
    <source>
        <strain>cv. Columbia</strain>
    </source>
</reference>
<reference key="2">
    <citation type="journal article" date="2017" name="Plant J.">
        <title>Araport11: a complete reannotation of the Arabidopsis thaliana reference genome.</title>
        <authorList>
            <person name="Cheng C.Y."/>
            <person name="Krishnakumar V."/>
            <person name="Chan A.P."/>
            <person name="Thibaud-Nissen F."/>
            <person name="Schobel S."/>
            <person name="Town C.D."/>
        </authorList>
    </citation>
    <scope>GENOME REANNOTATION</scope>
    <source>
        <strain>cv. Columbia</strain>
    </source>
</reference>
<reference key="3">
    <citation type="submission" date="2006-09" db="EMBL/GenBank/DDBJ databases">
        <title>Arabidopsis ORF clones.</title>
        <authorList>
            <person name="Bautista V.R."/>
            <person name="Kim C.J."/>
            <person name="Chen H."/>
            <person name="Quinitio C."/>
            <person name="Ecker J.R."/>
        </authorList>
    </citation>
    <scope>NUCLEOTIDE SEQUENCE [LARGE SCALE MRNA]</scope>
    <source>
        <strain>cv. Columbia</strain>
    </source>
</reference>
<comment type="cofactor">
    <cofactor evidence="1">
        <name>heme</name>
        <dbReference type="ChEBI" id="CHEBI:30413"/>
    </cofactor>
</comment>
<comment type="subcellular location">
    <subcellularLocation>
        <location evidence="3">Membrane</location>
        <topology evidence="3">Single-pass membrane protein</topology>
    </subcellularLocation>
</comment>
<comment type="alternative products">
    <event type="alternative splicing"/>
    <isoform>
        <id>Q9STK9-1</id>
        <name>1</name>
        <sequence type="displayed"/>
    </isoform>
    <text>A number of isoforms are produced. According to EST sequences.</text>
</comment>
<comment type="similarity">
    <text evidence="3">Belongs to the cytochrome P450 family.</text>
</comment>
<comment type="sequence caution" evidence="3">
    <conflict type="erroneous gene model prediction">
        <sequence resource="EMBL-CDS" id="CAB41169"/>
    </conflict>
</comment>
<organism>
    <name type="scientific">Arabidopsis thaliana</name>
    <name type="common">Mouse-ear cress</name>
    <dbReference type="NCBI Taxonomy" id="3702"/>
    <lineage>
        <taxon>Eukaryota</taxon>
        <taxon>Viridiplantae</taxon>
        <taxon>Streptophyta</taxon>
        <taxon>Embryophyta</taxon>
        <taxon>Tracheophyta</taxon>
        <taxon>Spermatophyta</taxon>
        <taxon>Magnoliopsida</taxon>
        <taxon>eudicotyledons</taxon>
        <taxon>Gunneridae</taxon>
        <taxon>Pentapetalae</taxon>
        <taxon>rosids</taxon>
        <taxon>malvids</taxon>
        <taxon>Brassicales</taxon>
        <taxon>Brassicaceae</taxon>
        <taxon>Camelineae</taxon>
        <taxon>Arabidopsis</taxon>
    </lineage>
</organism>
<accession>Q9STK9</accession>
<accession>Q304B3</accession>
<dbReference type="EC" id="1.14.-.-"/>
<dbReference type="EMBL" id="AL049659">
    <property type="protein sequence ID" value="CAB41169.1"/>
    <property type="status" value="ALT_SEQ"/>
    <property type="molecule type" value="Genomic_DNA"/>
</dbReference>
<dbReference type="EMBL" id="CP002686">
    <property type="protein sequence ID" value="AEE78395.1"/>
    <property type="molecule type" value="Genomic_DNA"/>
</dbReference>
<dbReference type="EMBL" id="BT028956">
    <property type="protein sequence ID" value="ABI54331.1"/>
    <property type="molecule type" value="mRNA"/>
</dbReference>
<dbReference type="RefSeq" id="NP_680108.2">
    <molecule id="Q9STK9-1"/>
    <property type="nucleotide sequence ID" value="NM_148855.3"/>
</dbReference>
<dbReference type="SMR" id="Q9STK9"/>
<dbReference type="FunCoup" id="Q9STK9">
    <property type="interactions" value="191"/>
</dbReference>
<dbReference type="STRING" id="3702.Q9STK9"/>
<dbReference type="MetOSite" id="Q9STK9"/>
<dbReference type="PaxDb" id="3702-AT3G48290.2"/>
<dbReference type="ProteomicsDB" id="240300">
    <molecule id="Q9STK9-1"/>
</dbReference>
<dbReference type="EnsemblPlants" id="AT3G48290.1">
    <molecule id="Q9STK9-1"/>
    <property type="protein sequence ID" value="AT3G48290.1"/>
    <property type="gene ID" value="AT3G48290"/>
</dbReference>
<dbReference type="GeneID" id="823987"/>
<dbReference type="Gramene" id="AT3G48290.1">
    <molecule id="Q9STK9-1"/>
    <property type="protein sequence ID" value="AT3G48290.1"/>
    <property type="gene ID" value="AT3G48290"/>
</dbReference>
<dbReference type="KEGG" id="ath:AT3G48290"/>
<dbReference type="Araport" id="AT3G48290"/>
<dbReference type="TAIR" id="AT3G48290">
    <property type="gene designation" value="CYP71A24"/>
</dbReference>
<dbReference type="eggNOG" id="KOG0156">
    <property type="taxonomic scope" value="Eukaryota"/>
</dbReference>
<dbReference type="InParanoid" id="Q9STK9"/>
<dbReference type="OMA" id="PCIVAHE"/>
<dbReference type="PhylomeDB" id="Q9STK9"/>
<dbReference type="BioCyc" id="ARA:AT3G48290-MONOMER"/>
<dbReference type="PRO" id="PR:Q9STK9"/>
<dbReference type="Proteomes" id="UP000006548">
    <property type="component" value="Chromosome 3"/>
</dbReference>
<dbReference type="ExpressionAtlas" id="Q9STK9">
    <property type="expression patterns" value="baseline and differential"/>
</dbReference>
<dbReference type="GO" id="GO:0016020">
    <property type="term" value="C:membrane"/>
    <property type="evidence" value="ECO:0007669"/>
    <property type="project" value="UniProtKB-SubCell"/>
</dbReference>
<dbReference type="GO" id="GO:0020037">
    <property type="term" value="F:heme binding"/>
    <property type="evidence" value="ECO:0007669"/>
    <property type="project" value="InterPro"/>
</dbReference>
<dbReference type="GO" id="GO:0005506">
    <property type="term" value="F:iron ion binding"/>
    <property type="evidence" value="ECO:0007669"/>
    <property type="project" value="InterPro"/>
</dbReference>
<dbReference type="GO" id="GO:0004497">
    <property type="term" value="F:monooxygenase activity"/>
    <property type="evidence" value="ECO:0007669"/>
    <property type="project" value="UniProtKB-KW"/>
</dbReference>
<dbReference type="GO" id="GO:0016705">
    <property type="term" value="F:oxidoreductase activity, acting on paired donors, with incorporation or reduction of molecular oxygen"/>
    <property type="evidence" value="ECO:0007669"/>
    <property type="project" value="InterPro"/>
</dbReference>
<dbReference type="CDD" id="cd11072">
    <property type="entry name" value="CYP71-like"/>
    <property type="match status" value="1"/>
</dbReference>
<dbReference type="FunFam" id="1.10.630.10:FF:000011">
    <property type="entry name" value="Cytochrome P450 83B1"/>
    <property type="match status" value="1"/>
</dbReference>
<dbReference type="Gene3D" id="1.10.630.10">
    <property type="entry name" value="Cytochrome P450"/>
    <property type="match status" value="1"/>
</dbReference>
<dbReference type="InterPro" id="IPR001128">
    <property type="entry name" value="Cyt_P450"/>
</dbReference>
<dbReference type="InterPro" id="IPR017972">
    <property type="entry name" value="Cyt_P450_CS"/>
</dbReference>
<dbReference type="InterPro" id="IPR002401">
    <property type="entry name" value="Cyt_P450_E_grp-I"/>
</dbReference>
<dbReference type="InterPro" id="IPR036396">
    <property type="entry name" value="Cyt_P450_sf"/>
</dbReference>
<dbReference type="PANTHER" id="PTHR47955:SF15">
    <property type="entry name" value="CYTOCHROME P450 71A2-LIKE"/>
    <property type="match status" value="1"/>
</dbReference>
<dbReference type="PANTHER" id="PTHR47955">
    <property type="entry name" value="CYTOCHROME P450 FAMILY 71 PROTEIN"/>
    <property type="match status" value="1"/>
</dbReference>
<dbReference type="Pfam" id="PF00067">
    <property type="entry name" value="p450"/>
    <property type="match status" value="1"/>
</dbReference>
<dbReference type="PRINTS" id="PR00463">
    <property type="entry name" value="EP450I"/>
</dbReference>
<dbReference type="PRINTS" id="PR00385">
    <property type="entry name" value="P450"/>
</dbReference>
<dbReference type="SUPFAM" id="SSF48264">
    <property type="entry name" value="Cytochrome P450"/>
    <property type="match status" value="1"/>
</dbReference>
<dbReference type="PROSITE" id="PS00086">
    <property type="entry name" value="CYTOCHROME_P450"/>
    <property type="match status" value="1"/>
</dbReference>
<evidence type="ECO:0000250" key="1"/>
<evidence type="ECO:0000255" key="2"/>
<evidence type="ECO:0000305" key="3"/>
<proteinExistence type="evidence at transcript level"/>
<sequence>MKMMMMIILLLCSIILITILFFKKQSRGKKSNAPPSPPRLPLIRNLHQLGRHPHRSLCSLSHRYGPLMLLHFGSVPVLVVSSADAAKDVLKTHDRVFASRPRSKIFDKIFYNGRDVALAPYGEYWRQMKSVCVLHLFSNKMVRSFRDVRQEEISLMIEKIRISSSLRINLSEILVNLTNNVICRVALGRKYGGKTDFKDLMKRLTRLLGEFSVGSYVSWLAWIDWIRGLDGQLIKISNDLDEFLERVVQDHVDGDGHKNDFVDFLLTIEREKSVGFEIDRLSIKAIILDVFVGDMDTTYTLLEWAMTELLCHHECLDRLQEEVRMVCKDKSGVSEDDLQDMKYLKAVIKETLRLHPPLPLMVPHESTHDVKLRDYHIPAGTHVMINAWAIGREAATWGPDAEEFRPERHLNSYVDYRGQDTELVPFGAGRRICPAISFAVVLDEVVLANLVHQFDWTLPEESTEYQTDVAESTGMAVHRMFPLFAMTT</sequence>
<gene>
    <name type="primary">CYP71A24</name>
    <name type="ordered locus">At3g48290</name>
    <name type="ORF">T29H11.190</name>
</gene>
<feature type="chain" id="PRO_0000052074" description="Cytochrome P450 71A24">
    <location>
        <begin position="1"/>
        <end position="488"/>
    </location>
</feature>
<feature type="transmembrane region" description="Helical" evidence="2">
    <location>
        <begin position="3"/>
        <end position="23"/>
    </location>
</feature>
<feature type="binding site" description="axial binding residue" evidence="1">
    <location>
        <position position="433"/>
    </location>
    <ligand>
        <name>heme</name>
        <dbReference type="ChEBI" id="CHEBI:30413"/>
    </ligand>
    <ligandPart>
        <name>Fe</name>
        <dbReference type="ChEBI" id="CHEBI:18248"/>
    </ligandPart>
</feature>